<proteinExistence type="inferred from homology"/>
<name>MURA_VARPS</name>
<dbReference type="EC" id="2.5.1.7" evidence="1"/>
<dbReference type="EMBL" id="CP001635">
    <property type="protein sequence ID" value="ACS17814.1"/>
    <property type="molecule type" value="Genomic_DNA"/>
</dbReference>
<dbReference type="SMR" id="C5CQI8"/>
<dbReference type="STRING" id="543728.Vapar_1163"/>
<dbReference type="KEGG" id="vap:Vapar_1163"/>
<dbReference type="eggNOG" id="COG0766">
    <property type="taxonomic scope" value="Bacteria"/>
</dbReference>
<dbReference type="HOGENOM" id="CLU_027387_0_0_4"/>
<dbReference type="OrthoDB" id="9803760at2"/>
<dbReference type="UniPathway" id="UPA00219"/>
<dbReference type="GO" id="GO:0005737">
    <property type="term" value="C:cytoplasm"/>
    <property type="evidence" value="ECO:0007669"/>
    <property type="project" value="UniProtKB-SubCell"/>
</dbReference>
<dbReference type="GO" id="GO:0008760">
    <property type="term" value="F:UDP-N-acetylglucosamine 1-carboxyvinyltransferase activity"/>
    <property type="evidence" value="ECO:0007669"/>
    <property type="project" value="UniProtKB-UniRule"/>
</dbReference>
<dbReference type="GO" id="GO:0051301">
    <property type="term" value="P:cell division"/>
    <property type="evidence" value="ECO:0007669"/>
    <property type="project" value="UniProtKB-KW"/>
</dbReference>
<dbReference type="GO" id="GO:0071555">
    <property type="term" value="P:cell wall organization"/>
    <property type="evidence" value="ECO:0007669"/>
    <property type="project" value="UniProtKB-KW"/>
</dbReference>
<dbReference type="GO" id="GO:0009252">
    <property type="term" value="P:peptidoglycan biosynthetic process"/>
    <property type="evidence" value="ECO:0007669"/>
    <property type="project" value="UniProtKB-UniRule"/>
</dbReference>
<dbReference type="GO" id="GO:0008360">
    <property type="term" value="P:regulation of cell shape"/>
    <property type="evidence" value="ECO:0007669"/>
    <property type="project" value="UniProtKB-KW"/>
</dbReference>
<dbReference type="GO" id="GO:0019277">
    <property type="term" value="P:UDP-N-acetylgalactosamine biosynthetic process"/>
    <property type="evidence" value="ECO:0007669"/>
    <property type="project" value="InterPro"/>
</dbReference>
<dbReference type="CDD" id="cd01555">
    <property type="entry name" value="UdpNAET"/>
    <property type="match status" value="1"/>
</dbReference>
<dbReference type="FunFam" id="3.65.10.10:FF:000001">
    <property type="entry name" value="UDP-N-acetylglucosamine 1-carboxyvinyltransferase"/>
    <property type="match status" value="1"/>
</dbReference>
<dbReference type="Gene3D" id="3.65.10.10">
    <property type="entry name" value="Enolpyruvate transferase domain"/>
    <property type="match status" value="2"/>
</dbReference>
<dbReference type="HAMAP" id="MF_00111">
    <property type="entry name" value="MurA"/>
    <property type="match status" value="1"/>
</dbReference>
<dbReference type="InterPro" id="IPR001986">
    <property type="entry name" value="Enolpyruvate_Tfrase_dom"/>
</dbReference>
<dbReference type="InterPro" id="IPR036968">
    <property type="entry name" value="Enolpyruvate_Tfrase_sf"/>
</dbReference>
<dbReference type="InterPro" id="IPR050068">
    <property type="entry name" value="MurA_subfamily"/>
</dbReference>
<dbReference type="InterPro" id="IPR013792">
    <property type="entry name" value="RNA3'P_cycl/enolpyr_Trfase_a/b"/>
</dbReference>
<dbReference type="InterPro" id="IPR005750">
    <property type="entry name" value="UDP_GlcNAc_COvinyl_MurA"/>
</dbReference>
<dbReference type="NCBIfam" id="TIGR01072">
    <property type="entry name" value="murA"/>
    <property type="match status" value="1"/>
</dbReference>
<dbReference type="NCBIfam" id="NF006873">
    <property type="entry name" value="PRK09369.1"/>
    <property type="match status" value="1"/>
</dbReference>
<dbReference type="PANTHER" id="PTHR43783">
    <property type="entry name" value="UDP-N-ACETYLGLUCOSAMINE 1-CARBOXYVINYLTRANSFERASE"/>
    <property type="match status" value="1"/>
</dbReference>
<dbReference type="PANTHER" id="PTHR43783:SF1">
    <property type="entry name" value="UDP-N-ACETYLGLUCOSAMINE 1-CARBOXYVINYLTRANSFERASE"/>
    <property type="match status" value="1"/>
</dbReference>
<dbReference type="Pfam" id="PF00275">
    <property type="entry name" value="EPSP_synthase"/>
    <property type="match status" value="1"/>
</dbReference>
<dbReference type="SUPFAM" id="SSF55205">
    <property type="entry name" value="EPT/RTPC-like"/>
    <property type="match status" value="1"/>
</dbReference>
<protein>
    <recommendedName>
        <fullName evidence="1">UDP-N-acetylglucosamine 1-carboxyvinyltransferase</fullName>
        <ecNumber evidence="1">2.5.1.7</ecNumber>
    </recommendedName>
    <alternativeName>
        <fullName evidence="1">Enoylpyruvate transferase</fullName>
    </alternativeName>
    <alternativeName>
        <fullName evidence="1">UDP-N-acetylglucosamine enolpyruvyl transferase</fullName>
        <shortName evidence="1">EPT</shortName>
    </alternativeName>
</protein>
<evidence type="ECO:0000255" key="1">
    <source>
        <dbReference type="HAMAP-Rule" id="MF_00111"/>
    </source>
</evidence>
<reference key="1">
    <citation type="journal article" date="2011" name="J. Bacteriol.">
        <title>Complete genome sequence of the metabolically versatile plant growth-promoting endophyte, Variovorax paradoxus S110.</title>
        <authorList>
            <person name="Han J.I."/>
            <person name="Choi H.K."/>
            <person name="Lee S.W."/>
            <person name="Orwin P.M."/>
            <person name="Kim J."/>
            <person name="Laroe S.L."/>
            <person name="Kim T.G."/>
            <person name="O'Neil J."/>
            <person name="Leadbetter J.R."/>
            <person name="Lee S.Y."/>
            <person name="Hur C.G."/>
            <person name="Spain J.C."/>
            <person name="Ovchinnikova G."/>
            <person name="Goodwin L."/>
            <person name="Han C."/>
        </authorList>
    </citation>
    <scope>NUCLEOTIDE SEQUENCE [LARGE SCALE GENOMIC DNA]</scope>
    <source>
        <strain>S110</strain>
    </source>
</reference>
<sequence length="429" mass="45608">MDKLLIRGGRQLRGEVLISGAKNAALPELCAALLTDQPVTLHNVPRLQDVSTMLKLVRNMGVAAERDDNGTVRLDAGDLSIPEAPYELVKTMRASVLALGPLLARFGHAKVSLPGGCAIGSRPVDQHIKGLQAMGAEIVVEHGYMIASLPAGRTRLKGARILTDMVTVTGTENFLMAAALAEGETLLENAAQEPEIVDLAEMLIRMGARIEGHGTSHIRIQGVEKLHGCEHAVVADRIEAGTFLCAVAATGGDVFLRHARADHMDAVIDKLRDAGCTVAAQEGGVRISSSAPACEHLKAQSFSTTEYPGFPTDMQAQFMALNVIARGASMVTETIFENRFMHVNEMVRLGATIHVEGKVAMVEGVQQLSGATVMATDLRASASLVIAGLVADGETLVDRIYHLDRGYDRMEAKLRGLGADIERISGAAA</sequence>
<keyword id="KW-0131">Cell cycle</keyword>
<keyword id="KW-0132">Cell division</keyword>
<keyword id="KW-0133">Cell shape</keyword>
<keyword id="KW-0961">Cell wall biogenesis/degradation</keyword>
<keyword id="KW-0963">Cytoplasm</keyword>
<keyword id="KW-0573">Peptidoglycan synthesis</keyword>
<keyword id="KW-0670">Pyruvate</keyword>
<keyword id="KW-0808">Transferase</keyword>
<accession>C5CQI8</accession>
<gene>
    <name evidence="1" type="primary">murA</name>
    <name type="ordered locus">Vapar_1163</name>
</gene>
<feature type="chain" id="PRO_1000202937" description="UDP-N-acetylglucosamine 1-carboxyvinyltransferase">
    <location>
        <begin position="1"/>
        <end position="429"/>
    </location>
</feature>
<feature type="active site" description="Proton donor" evidence="1">
    <location>
        <position position="117"/>
    </location>
</feature>
<feature type="binding site" evidence="1">
    <location>
        <begin position="22"/>
        <end position="23"/>
    </location>
    <ligand>
        <name>phosphoenolpyruvate</name>
        <dbReference type="ChEBI" id="CHEBI:58702"/>
    </ligand>
</feature>
<feature type="binding site" evidence="1">
    <location>
        <position position="93"/>
    </location>
    <ligand>
        <name>UDP-N-acetyl-alpha-D-glucosamine</name>
        <dbReference type="ChEBI" id="CHEBI:57705"/>
    </ligand>
</feature>
<feature type="binding site" evidence="1">
    <location>
        <begin position="122"/>
        <end position="126"/>
    </location>
    <ligand>
        <name>UDP-N-acetyl-alpha-D-glucosamine</name>
        <dbReference type="ChEBI" id="CHEBI:57705"/>
    </ligand>
</feature>
<feature type="binding site" evidence="1">
    <location>
        <position position="313"/>
    </location>
    <ligand>
        <name>UDP-N-acetyl-alpha-D-glucosamine</name>
        <dbReference type="ChEBI" id="CHEBI:57705"/>
    </ligand>
</feature>
<feature type="binding site" evidence="1">
    <location>
        <position position="335"/>
    </location>
    <ligand>
        <name>UDP-N-acetyl-alpha-D-glucosamine</name>
        <dbReference type="ChEBI" id="CHEBI:57705"/>
    </ligand>
</feature>
<feature type="modified residue" description="2-(S-cysteinyl)pyruvic acid O-phosphothioketal" evidence="1">
    <location>
        <position position="117"/>
    </location>
</feature>
<organism>
    <name type="scientific">Variovorax paradoxus (strain S110)</name>
    <dbReference type="NCBI Taxonomy" id="543728"/>
    <lineage>
        <taxon>Bacteria</taxon>
        <taxon>Pseudomonadati</taxon>
        <taxon>Pseudomonadota</taxon>
        <taxon>Betaproteobacteria</taxon>
        <taxon>Burkholderiales</taxon>
        <taxon>Comamonadaceae</taxon>
        <taxon>Variovorax</taxon>
    </lineage>
</organism>
<comment type="function">
    <text evidence="1">Cell wall formation. Adds enolpyruvyl to UDP-N-acetylglucosamine.</text>
</comment>
<comment type="catalytic activity">
    <reaction evidence="1">
        <text>phosphoenolpyruvate + UDP-N-acetyl-alpha-D-glucosamine = UDP-N-acetyl-3-O-(1-carboxyvinyl)-alpha-D-glucosamine + phosphate</text>
        <dbReference type="Rhea" id="RHEA:18681"/>
        <dbReference type="ChEBI" id="CHEBI:43474"/>
        <dbReference type="ChEBI" id="CHEBI:57705"/>
        <dbReference type="ChEBI" id="CHEBI:58702"/>
        <dbReference type="ChEBI" id="CHEBI:68483"/>
        <dbReference type="EC" id="2.5.1.7"/>
    </reaction>
</comment>
<comment type="pathway">
    <text evidence="1">Cell wall biogenesis; peptidoglycan biosynthesis.</text>
</comment>
<comment type="subcellular location">
    <subcellularLocation>
        <location evidence="1">Cytoplasm</location>
    </subcellularLocation>
</comment>
<comment type="similarity">
    <text evidence="1">Belongs to the EPSP synthase family. MurA subfamily.</text>
</comment>